<comment type="function">
    <text evidence="6 8">Highly reducing polyketide synthase; part of the gene cluster that mediates the biosynthesis of the selective antifungal agent ascochitine, an o-quinone methide that plays a possible protective role against other microbial competitors in nature and is considered to be important for pathogenicity of legume-associated Didymella species (PubMed:31554725). The pathway probably begins with the synthesis of a keto-aldehyde intermediate by the ascochitine non-reducing polyketide synthase pksAC from successive condensations of 4 malonyl-CoA units, presumably with a simple acetyl-CoA starter unit (Probable). Release of the keto-aldehyde intermediate is consistent with the presence of the C-terminal reductive release domain (Probable). The HR-PKS (orf7) probably makes a diketide starter unit which is passed to the non-reducing polyketide synthase pksAC for further extension, producing ascochital and ascochitine (Probable). The aldehyde dehydrogenase (orf1), the 2-oxoglutarate-dependent dioxygenase (orf3) and the dehydrogenase (orf9) are probably involved in subsequent oxidations of methyl groups to the carboxylic acid of the heterocyclic ring (Probable). The ascochitine gene cluster also includes a gene encoding a short peptide with a cupin domain (orf2) that is often found in secondary metabolite gene clusters and which function has still to be determined (Probable).</text>
</comment>
<comment type="pathway">
    <text evidence="8">Mycotoxin biosynthesis.</text>
</comment>
<comment type="domain">
    <text evidence="8">Multidomain protein; including a ketosynthase (KS) that catalyzes repeated decarboxylative condensation to elongate the polyketide backbone; a malonyl-CoA:ACP transacylase (MAT) that selects and transfers the extender unit malonyl-CoA; a dehydratase (DH) domain that reduces hydroxyl groups to enoyl groups; an enoylreductase (ER) domain that reduces enoyl groups to alkyl groups; a ketoreductase (KR) domain that catalyzes beta-ketoreduction steps; and an acyl-carrier protein (ACP) that serves as the tether of the growing and completed polyketide via its phosphopantetheinyl arm.</text>
</comment>
<feature type="chain" id="PRO_0000448991" description="Highly reducing polyketide synthase">
    <location>
        <begin position="1"/>
        <end position="1886"/>
    </location>
</feature>
<feature type="domain" description="Ketosynthase family 3 (KS3)" evidence="4">
    <location>
        <begin position="11"/>
        <end position="434"/>
    </location>
</feature>
<feature type="domain" description="PKS/mFAS DH" evidence="5">
    <location>
        <begin position="616"/>
        <end position="926"/>
    </location>
</feature>
<feature type="domain" description="Carrier" evidence="3">
    <location>
        <begin position="1802"/>
        <end position="1879"/>
    </location>
</feature>
<feature type="region of interest" description="Malonyl-CoA:ACP transacylase (MAT) domain" evidence="1 2">
    <location>
        <begin position="483"/>
        <end position="568"/>
    </location>
</feature>
<feature type="region of interest" description="N-terminal hotdog fold" evidence="5">
    <location>
        <begin position="616"/>
        <end position="750"/>
    </location>
</feature>
<feature type="region of interest" description="Dehydratase (DH) domain" evidence="1 2">
    <location>
        <begin position="618"/>
        <end position="924"/>
    </location>
</feature>
<feature type="region of interest" description="C-terminal hotdog fold" evidence="5">
    <location>
        <begin position="778"/>
        <end position="926"/>
    </location>
</feature>
<feature type="region of interest" description="Enoylreductase (ER) domain" evidence="1 2">
    <location>
        <begin position="1169"/>
        <end position="1480"/>
    </location>
</feature>
<feature type="region of interest" description="Catalytic ketoreductase (KRc) domain" evidence="1 2">
    <location>
        <begin position="1503"/>
        <end position="1681"/>
    </location>
</feature>
<feature type="active site" description="For beta-ketoacyl synthase activity" evidence="4">
    <location>
        <position position="182"/>
    </location>
</feature>
<feature type="active site" description="For beta-ketoacyl synthase activity" evidence="4">
    <location>
        <position position="317"/>
    </location>
</feature>
<feature type="active site" description="For beta-ketoacyl synthase activity" evidence="4">
    <location>
        <position position="357"/>
    </location>
</feature>
<feature type="active site" description="Proton acceptor; for dehydratase activity" evidence="5">
    <location>
        <position position="648"/>
    </location>
</feature>
<feature type="active site" description="Proton donor; for dehydratase activity" evidence="5">
    <location>
        <position position="838"/>
    </location>
</feature>
<feature type="modified residue" description="O-(pantetheine 4'-phosphoryl)serine" evidence="3">
    <location>
        <position position="1839"/>
    </location>
</feature>
<proteinExistence type="inferred from homology"/>
<protein>
    <recommendedName>
        <fullName evidence="7">Highly reducing polyketide synthase</fullName>
        <ecNumber evidence="8">2.3.1.-</ecNumber>
    </recommendedName>
    <alternativeName>
        <fullName evidence="7">Ascochitine biosynthesis cluster protein 7</fullName>
    </alternativeName>
</protein>
<dbReference type="EC" id="2.3.1.-" evidence="8"/>
<dbReference type="EMBL" id="MN052628">
    <property type="protein sequence ID" value="QEN17975.1"/>
    <property type="molecule type" value="Genomic_DNA"/>
</dbReference>
<dbReference type="SMR" id="A0A5C1RDA3"/>
<dbReference type="GO" id="GO:0004315">
    <property type="term" value="F:3-oxoacyl-[acyl-carrier-protein] synthase activity"/>
    <property type="evidence" value="ECO:0007669"/>
    <property type="project" value="InterPro"/>
</dbReference>
<dbReference type="GO" id="GO:0004312">
    <property type="term" value="F:fatty acid synthase activity"/>
    <property type="evidence" value="ECO:0007669"/>
    <property type="project" value="TreeGrafter"/>
</dbReference>
<dbReference type="GO" id="GO:0016491">
    <property type="term" value="F:oxidoreductase activity"/>
    <property type="evidence" value="ECO:0007669"/>
    <property type="project" value="UniProtKB-KW"/>
</dbReference>
<dbReference type="GO" id="GO:0031177">
    <property type="term" value="F:phosphopantetheine binding"/>
    <property type="evidence" value="ECO:0007669"/>
    <property type="project" value="InterPro"/>
</dbReference>
<dbReference type="GO" id="GO:0008270">
    <property type="term" value="F:zinc ion binding"/>
    <property type="evidence" value="ECO:0007669"/>
    <property type="project" value="InterPro"/>
</dbReference>
<dbReference type="GO" id="GO:0006633">
    <property type="term" value="P:fatty acid biosynthetic process"/>
    <property type="evidence" value="ECO:0007669"/>
    <property type="project" value="InterPro"/>
</dbReference>
<dbReference type="GO" id="GO:0044550">
    <property type="term" value="P:secondary metabolite biosynthetic process"/>
    <property type="evidence" value="ECO:0007669"/>
    <property type="project" value="TreeGrafter"/>
</dbReference>
<dbReference type="CDD" id="cd05195">
    <property type="entry name" value="enoyl_red"/>
    <property type="match status" value="1"/>
</dbReference>
<dbReference type="CDD" id="cd00833">
    <property type="entry name" value="PKS"/>
    <property type="match status" value="1"/>
</dbReference>
<dbReference type="FunFam" id="3.40.50.720:FF:000209">
    <property type="entry name" value="Polyketide synthase Pks12"/>
    <property type="match status" value="1"/>
</dbReference>
<dbReference type="Gene3D" id="3.30.70.3290">
    <property type="match status" value="1"/>
</dbReference>
<dbReference type="Gene3D" id="3.40.47.10">
    <property type="match status" value="1"/>
</dbReference>
<dbReference type="Gene3D" id="1.10.1200.10">
    <property type="entry name" value="ACP-like"/>
    <property type="match status" value="1"/>
</dbReference>
<dbReference type="Gene3D" id="3.90.180.10">
    <property type="entry name" value="Medium-chain alcohol dehydrogenases, catalytic domain"/>
    <property type="match status" value="1"/>
</dbReference>
<dbReference type="Gene3D" id="3.40.50.720">
    <property type="entry name" value="NAD(P)-binding Rossmann-like Domain"/>
    <property type="match status" value="2"/>
</dbReference>
<dbReference type="Gene3D" id="3.10.129.110">
    <property type="entry name" value="Polyketide synthase dehydratase"/>
    <property type="match status" value="1"/>
</dbReference>
<dbReference type="InterPro" id="IPR036736">
    <property type="entry name" value="ACP-like_sf"/>
</dbReference>
<dbReference type="InterPro" id="IPR013149">
    <property type="entry name" value="ADH-like_C"/>
</dbReference>
<dbReference type="InterPro" id="IPR013154">
    <property type="entry name" value="ADH-like_N"/>
</dbReference>
<dbReference type="InterPro" id="IPR002328">
    <property type="entry name" value="ADH_Zn_CS"/>
</dbReference>
<dbReference type="InterPro" id="IPR011032">
    <property type="entry name" value="GroES-like_sf"/>
</dbReference>
<dbReference type="InterPro" id="IPR018201">
    <property type="entry name" value="Ketoacyl_synth_AS"/>
</dbReference>
<dbReference type="InterPro" id="IPR014031">
    <property type="entry name" value="Ketoacyl_synth_C"/>
</dbReference>
<dbReference type="InterPro" id="IPR014030">
    <property type="entry name" value="Ketoacyl_synth_N"/>
</dbReference>
<dbReference type="InterPro" id="IPR036291">
    <property type="entry name" value="NAD(P)-bd_dom_sf"/>
</dbReference>
<dbReference type="InterPro" id="IPR056501">
    <property type="entry name" value="NAD-bd_HRPKS_sdrA"/>
</dbReference>
<dbReference type="InterPro" id="IPR032821">
    <property type="entry name" value="PKS_assoc"/>
</dbReference>
<dbReference type="InterPro" id="IPR020841">
    <property type="entry name" value="PKS_Beta-ketoAc_synthase_dom"/>
</dbReference>
<dbReference type="InterPro" id="IPR042104">
    <property type="entry name" value="PKS_dehydratase_sf"/>
</dbReference>
<dbReference type="InterPro" id="IPR020807">
    <property type="entry name" value="PKS_DH"/>
</dbReference>
<dbReference type="InterPro" id="IPR049551">
    <property type="entry name" value="PKS_DH_C"/>
</dbReference>
<dbReference type="InterPro" id="IPR049552">
    <property type="entry name" value="PKS_DH_N"/>
</dbReference>
<dbReference type="InterPro" id="IPR020843">
    <property type="entry name" value="PKS_ER"/>
</dbReference>
<dbReference type="InterPro" id="IPR013968">
    <property type="entry name" value="PKS_KR"/>
</dbReference>
<dbReference type="InterPro" id="IPR049900">
    <property type="entry name" value="PKS_mFAS_DH"/>
</dbReference>
<dbReference type="InterPro" id="IPR050091">
    <property type="entry name" value="PKS_NRPS_Biosynth_Enz"/>
</dbReference>
<dbReference type="InterPro" id="IPR020806">
    <property type="entry name" value="PKS_PP-bd"/>
</dbReference>
<dbReference type="InterPro" id="IPR009081">
    <property type="entry name" value="PP-bd_ACP"/>
</dbReference>
<dbReference type="InterPro" id="IPR016039">
    <property type="entry name" value="Thiolase-like"/>
</dbReference>
<dbReference type="PANTHER" id="PTHR43775:SF29">
    <property type="entry name" value="ASPERFURANONE POLYKETIDE SYNTHASE AFOG-RELATED"/>
    <property type="match status" value="1"/>
</dbReference>
<dbReference type="PANTHER" id="PTHR43775">
    <property type="entry name" value="FATTY ACID SYNTHASE"/>
    <property type="match status" value="1"/>
</dbReference>
<dbReference type="Pfam" id="PF23297">
    <property type="entry name" value="ACP_SdgA_C"/>
    <property type="match status" value="1"/>
</dbReference>
<dbReference type="Pfam" id="PF08240">
    <property type="entry name" value="ADH_N"/>
    <property type="match status" value="1"/>
</dbReference>
<dbReference type="Pfam" id="PF00107">
    <property type="entry name" value="ADH_zinc_N"/>
    <property type="match status" value="1"/>
</dbReference>
<dbReference type="Pfam" id="PF16197">
    <property type="entry name" value="KAsynt_C_assoc"/>
    <property type="match status" value="1"/>
</dbReference>
<dbReference type="Pfam" id="PF00109">
    <property type="entry name" value="ketoacyl-synt"/>
    <property type="match status" value="1"/>
</dbReference>
<dbReference type="Pfam" id="PF02801">
    <property type="entry name" value="Ketoacyl-synt_C"/>
    <property type="match status" value="1"/>
</dbReference>
<dbReference type="Pfam" id="PF08659">
    <property type="entry name" value="KR"/>
    <property type="match status" value="1"/>
</dbReference>
<dbReference type="Pfam" id="PF23114">
    <property type="entry name" value="NAD-bd_HRPKS_sdrA"/>
    <property type="match status" value="1"/>
</dbReference>
<dbReference type="Pfam" id="PF21089">
    <property type="entry name" value="PKS_DH_N"/>
    <property type="match status" value="1"/>
</dbReference>
<dbReference type="Pfam" id="PF14765">
    <property type="entry name" value="PS-DH"/>
    <property type="match status" value="1"/>
</dbReference>
<dbReference type="SMART" id="SM00826">
    <property type="entry name" value="PKS_DH"/>
    <property type="match status" value="1"/>
</dbReference>
<dbReference type="SMART" id="SM00829">
    <property type="entry name" value="PKS_ER"/>
    <property type="match status" value="1"/>
</dbReference>
<dbReference type="SMART" id="SM00822">
    <property type="entry name" value="PKS_KR"/>
    <property type="match status" value="1"/>
</dbReference>
<dbReference type="SMART" id="SM00825">
    <property type="entry name" value="PKS_KS"/>
    <property type="match status" value="1"/>
</dbReference>
<dbReference type="SMART" id="SM00823">
    <property type="entry name" value="PKS_PP"/>
    <property type="match status" value="1"/>
</dbReference>
<dbReference type="SUPFAM" id="SSF47336">
    <property type="entry name" value="ACP-like"/>
    <property type="match status" value="1"/>
</dbReference>
<dbReference type="SUPFAM" id="SSF50129">
    <property type="entry name" value="GroES-like"/>
    <property type="match status" value="1"/>
</dbReference>
<dbReference type="SUPFAM" id="SSF51735">
    <property type="entry name" value="NAD(P)-binding Rossmann-fold domains"/>
    <property type="match status" value="2"/>
</dbReference>
<dbReference type="SUPFAM" id="SSF53901">
    <property type="entry name" value="Thiolase-like"/>
    <property type="match status" value="1"/>
</dbReference>
<dbReference type="PROSITE" id="PS00059">
    <property type="entry name" value="ADH_ZINC"/>
    <property type="match status" value="1"/>
</dbReference>
<dbReference type="PROSITE" id="PS50075">
    <property type="entry name" value="CARRIER"/>
    <property type="match status" value="1"/>
</dbReference>
<dbReference type="PROSITE" id="PS00606">
    <property type="entry name" value="KS3_1"/>
    <property type="match status" value="1"/>
</dbReference>
<dbReference type="PROSITE" id="PS52004">
    <property type="entry name" value="KS3_2"/>
    <property type="match status" value="1"/>
</dbReference>
<dbReference type="PROSITE" id="PS52019">
    <property type="entry name" value="PKS_MFAS_DH"/>
    <property type="match status" value="1"/>
</dbReference>
<sequence>MPSTDSSTKGTQDVAIVGLSCRFSGSATSANKFWDMLCNGESGHSETPRFNPKGFSDPGFRKQNQSATAYGHFLQQDVGAFDSRFFGITPEEALAMDPQQRMMLEVAYEAFENAGMTIEQLAGSRTSCFIGSFTSDYREMLFRDADAAPRYTVTGTGVSMLANRVSWFFDLRGPSVALNTACSSSLVALHLARRSLQSGEADIAIVGGTNLMLGSEMFTFFSNLNFLSRDGLSRSFDASGEGYGRGEGVAAVILKRVDDAIQDNDNIRAVVRGTSTNQDGKTKAITLPSLDAQIDLIRSAYKEGGLSFNDTTYFEAHGTGTRRGDPVELEAISKTLCVDRPTNSKIIVGSVKSNVGHTEATAGLAGIIKAIYMLEKGIIPATINYSRPLPEFDLNSSLLTIPVETKPWPGTSVRRISINSFGFGGANAHAVLDDAPSYLASKSLGNGTKDANSNAPVLRTNGSLVNGNGANEDVQTSTEQLSFLFSGQDQQSLDRNFETMVQHIQTKSFSDSRSELQYLVDLAYTLSERRSRFKVRAEVVASSVTQLVSKIQERSFARVNNDLANTKKSIPAEERTCELKRRVLVDLPAYSWDHSSTYWAESRVSKEFRLRKHPQRSLIGAPQPSYGENEHIWRGYLRLSEEPWVKDHQVLGAIVYPAAGYIAMAIEAAQDIADKGRKVSRYNLRDVQFQAAAVIKEDVPLELIIQMRPHRSATRSTATSWLEFSISSCHNEKNLRDNCFGLLSIEYESSQDSSMALEQEREDALVLDKHRRTAEVCHTTQSPKALYQELASVGLNYGEAFQQISEISKTDGLSSCRVLSYVPDRFSTPNVIHPATLDCMIQTIFPALSGNHTPIHAAMVPTLLEEMSVASRTPNAAASFFRGSASARYSGAREMLAEFAMVDQDNKLSVTARGLHCTAISEATNPRTEQDEDGRRNICSQLMWVPATGVDSVEQVQNKATAPTQTFPPHDQDILILEGDHAYATALSDALMSLDQGKGSYIPIPKSFLRASLQDLEGKTCIATLEMGTSFLANAATDGFDTLKEIVRRCSRIIWVSSSTEPIGSVITGLARTMRNENAGLVFRTLQVPSQDMYDSENLAEVVSQLAASPTMDSEFRLEGGVLRVSRVLRDTKTDNMVASMARNGGPEIRLSTLSQVGTAQKLALPRLGMLDEIYFEADETANGLLRDEEVEIEVKASGVNFRDVLVVMGNVSDDLIGHEASGIISRVGSKVTSFRVGDRVCAIGHGCHRSVYRSTADLVHKIPDGMSFEEAATVPLVYTTAYTAIIDLARAQKGQSILIHAAAGGVGLAAIQIAIHLGLEIFATVSSEPKRQLLHDHGVMEDHIFNSRDISFAKGIMRTTTGRGVDIVLNSLAGEQLRQSWHCLAPFGNFVEIGIKDIITNSSLDMSPFAKDATFTAFEVINIMHKDPKRMANILRNVFQLLGNRSVKPVKPLLSKPISEVGEALRLLQAGKHMGKVALTWDRGQTIPMATTVVKPVLSDTATYVLVGGFGGLGQSIARMFADRGARHLCILSRSGARSREAVETINKLENQGVQVQSLACDVSDEGSLRTAFETCKIEMPPIRGVIQGAMVLRDISFEKMSHNQWHEALKPKVDGTWNLHKLMLRDLDFFIILSSFMGIFGSRTQGNYAAAGAYQDALAHHRRSQGLKAVSLDLGLMRDVSAFSKKEALSGPFKDWQEPFGLREVDVHGLLDHVIASEMTAPSTIPAQILTGFGTAREAEEAGIEPPYYLEDPRFSLLHTTIVEAQQDTATQQQPAATPPDLVAKHTTGDLLRQATSTEDVTDLVLEILIVKVAKHLEQNVANIDPEEPLYTYGVDSLVAIEFRNWIMKEFAADIALLDITAEEPMFDLVDKIVAKSKFLSVPS</sequence>
<gene>
    <name evidence="7" type="ORF">orf7</name>
</gene>
<organism>
    <name type="scientific">Didymella fabae</name>
    <name type="common">Leaf and pod spot disease fungus</name>
    <name type="synonym">Ascochyta fabae</name>
    <dbReference type="NCBI Taxonomy" id="372025"/>
    <lineage>
        <taxon>Eukaryota</taxon>
        <taxon>Fungi</taxon>
        <taxon>Dikarya</taxon>
        <taxon>Ascomycota</taxon>
        <taxon>Pezizomycotina</taxon>
        <taxon>Dothideomycetes</taxon>
        <taxon>Pleosporomycetidae</taxon>
        <taxon>Pleosporales</taxon>
        <taxon>Pleosporineae</taxon>
        <taxon>Didymellaceae</taxon>
        <taxon>Ascochyta</taxon>
    </lineage>
</organism>
<evidence type="ECO:0000250" key="1">
    <source>
        <dbReference type="UniProtKB" id="A0A098D8A0"/>
    </source>
</evidence>
<evidence type="ECO:0000255" key="2"/>
<evidence type="ECO:0000255" key="3">
    <source>
        <dbReference type="PROSITE-ProRule" id="PRU00258"/>
    </source>
</evidence>
<evidence type="ECO:0000255" key="4">
    <source>
        <dbReference type="PROSITE-ProRule" id="PRU01348"/>
    </source>
</evidence>
<evidence type="ECO:0000255" key="5">
    <source>
        <dbReference type="PROSITE-ProRule" id="PRU01363"/>
    </source>
</evidence>
<evidence type="ECO:0000269" key="6">
    <source>
    </source>
</evidence>
<evidence type="ECO:0000303" key="7">
    <source>
    </source>
</evidence>
<evidence type="ECO:0000305" key="8">
    <source>
    </source>
</evidence>
<accession>A0A5C1RDA3</accession>
<name>ASC7_DIDFA</name>
<keyword id="KW-0511">Multifunctional enzyme</keyword>
<keyword id="KW-0560">Oxidoreductase</keyword>
<keyword id="KW-0596">Phosphopantetheine</keyword>
<keyword id="KW-0597">Phosphoprotein</keyword>
<keyword id="KW-0808">Transferase</keyword>
<keyword id="KW-0843">Virulence</keyword>
<reference key="1">
    <citation type="journal article" date="2019" name="MSphere">
        <title>Identification of a polyketide synthase gene responsible for ascochitine biosynthesis in Ascochyta fabae and its abrogation in sister taxa.</title>
        <authorList>
            <person name="Kim W."/>
            <person name="Lichtenzveig J."/>
            <person name="Syme R.A."/>
            <person name="Williams A.H."/>
            <person name="Peever T.L."/>
            <person name="Chen W."/>
        </authorList>
    </citation>
    <scope>NUCLEOTIDE SEQUENCE [GENOMIC DNA]</scope>
    <scope>FUNCTION</scope>
    <source>
        <strain>AF247/15</strain>
    </source>
</reference>